<protein>
    <recommendedName>
        <fullName evidence="1">Arginine repressor</fullName>
    </recommendedName>
</protein>
<organism>
    <name type="scientific">Koribacter versatilis (strain Ellin345)</name>
    <dbReference type="NCBI Taxonomy" id="204669"/>
    <lineage>
        <taxon>Bacteria</taxon>
        <taxon>Pseudomonadati</taxon>
        <taxon>Acidobacteriota</taxon>
        <taxon>Terriglobia</taxon>
        <taxon>Terriglobales</taxon>
        <taxon>Candidatus Korobacteraceae</taxon>
        <taxon>Candidatus Korobacter</taxon>
    </lineage>
</organism>
<comment type="function">
    <text evidence="1">Regulates arginine biosynthesis genes.</text>
</comment>
<comment type="pathway">
    <text>Amino-acid biosynthesis; L-arginine biosynthesis [regulation].</text>
</comment>
<comment type="subcellular location">
    <subcellularLocation>
        <location evidence="1">Cytoplasm</location>
    </subcellularLocation>
</comment>
<comment type="similarity">
    <text evidence="1">Belongs to the ArgR family.</text>
</comment>
<sequence>MSKLSRHAAIRDAITSHPVQNQDELRRLLFKRGHRVTQATLSRDIHELGLVKTGEGYQFPSSEDDSNAAWLPSVERLIREFVYDVKIAQNTVVVKTSAGSAQPVAAALDAEGWPEVVGTVGGDDTIFVVTPSNKDAEKLQSRIKELIA</sequence>
<keyword id="KW-0028">Amino-acid biosynthesis</keyword>
<keyword id="KW-0055">Arginine biosynthesis</keyword>
<keyword id="KW-0963">Cytoplasm</keyword>
<keyword id="KW-0238">DNA-binding</keyword>
<keyword id="KW-1185">Reference proteome</keyword>
<keyword id="KW-0678">Repressor</keyword>
<keyword id="KW-0804">Transcription</keyword>
<keyword id="KW-0805">Transcription regulation</keyword>
<feature type="chain" id="PRO_1000023539" description="Arginine repressor">
    <location>
        <begin position="1"/>
        <end position="148"/>
    </location>
</feature>
<name>ARGR_KORVE</name>
<gene>
    <name evidence="1" type="primary">argR</name>
    <name type="ordered locus">Acid345_4162</name>
</gene>
<dbReference type="EMBL" id="CP000360">
    <property type="protein sequence ID" value="ABF43162.1"/>
    <property type="molecule type" value="Genomic_DNA"/>
</dbReference>
<dbReference type="RefSeq" id="WP_011524961.1">
    <property type="nucleotide sequence ID" value="NC_008009.1"/>
</dbReference>
<dbReference type="SMR" id="Q1IIY8"/>
<dbReference type="STRING" id="204669.Acid345_4162"/>
<dbReference type="EnsemblBacteria" id="ABF43162">
    <property type="protein sequence ID" value="ABF43162"/>
    <property type="gene ID" value="Acid345_4162"/>
</dbReference>
<dbReference type="KEGG" id="aba:Acid345_4162"/>
<dbReference type="eggNOG" id="COG1438">
    <property type="taxonomic scope" value="Bacteria"/>
</dbReference>
<dbReference type="HOGENOM" id="CLU_097103_3_0_0"/>
<dbReference type="OrthoDB" id="9807089at2"/>
<dbReference type="UniPathway" id="UPA00068"/>
<dbReference type="Proteomes" id="UP000002432">
    <property type="component" value="Chromosome"/>
</dbReference>
<dbReference type="GO" id="GO:0005737">
    <property type="term" value="C:cytoplasm"/>
    <property type="evidence" value="ECO:0007669"/>
    <property type="project" value="UniProtKB-SubCell"/>
</dbReference>
<dbReference type="GO" id="GO:0034618">
    <property type="term" value="F:arginine binding"/>
    <property type="evidence" value="ECO:0007669"/>
    <property type="project" value="InterPro"/>
</dbReference>
<dbReference type="GO" id="GO:0003677">
    <property type="term" value="F:DNA binding"/>
    <property type="evidence" value="ECO:0007669"/>
    <property type="project" value="UniProtKB-KW"/>
</dbReference>
<dbReference type="GO" id="GO:0003700">
    <property type="term" value="F:DNA-binding transcription factor activity"/>
    <property type="evidence" value="ECO:0007669"/>
    <property type="project" value="UniProtKB-UniRule"/>
</dbReference>
<dbReference type="GO" id="GO:0006526">
    <property type="term" value="P:L-arginine biosynthetic process"/>
    <property type="evidence" value="ECO:0007669"/>
    <property type="project" value="UniProtKB-UniPathway"/>
</dbReference>
<dbReference type="GO" id="GO:0051259">
    <property type="term" value="P:protein complex oligomerization"/>
    <property type="evidence" value="ECO:0007669"/>
    <property type="project" value="InterPro"/>
</dbReference>
<dbReference type="GO" id="GO:1900079">
    <property type="term" value="P:regulation of arginine biosynthetic process"/>
    <property type="evidence" value="ECO:0007669"/>
    <property type="project" value="UniProtKB-UniRule"/>
</dbReference>
<dbReference type="Gene3D" id="3.30.1360.40">
    <property type="match status" value="1"/>
</dbReference>
<dbReference type="Gene3D" id="1.10.10.10">
    <property type="entry name" value="Winged helix-like DNA-binding domain superfamily/Winged helix DNA-binding domain"/>
    <property type="match status" value="1"/>
</dbReference>
<dbReference type="HAMAP" id="MF_00173">
    <property type="entry name" value="Arg_repressor"/>
    <property type="match status" value="1"/>
</dbReference>
<dbReference type="InterPro" id="IPR001669">
    <property type="entry name" value="Arg_repress"/>
</dbReference>
<dbReference type="InterPro" id="IPR020899">
    <property type="entry name" value="Arg_repress_C"/>
</dbReference>
<dbReference type="InterPro" id="IPR036251">
    <property type="entry name" value="Arg_repress_C_sf"/>
</dbReference>
<dbReference type="InterPro" id="IPR020900">
    <property type="entry name" value="Arg_repress_DNA-bd"/>
</dbReference>
<dbReference type="InterPro" id="IPR036388">
    <property type="entry name" value="WH-like_DNA-bd_sf"/>
</dbReference>
<dbReference type="InterPro" id="IPR036390">
    <property type="entry name" value="WH_DNA-bd_sf"/>
</dbReference>
<dbReference type="PANTHER" id="PTHR34471">
    <property type="entry name" value="ARGININE REPRESSOR"/>
    <property type="match status" value="1"/>
</dbReference>
<dbReference type="PANTHER" id="PTHR34471:SF1">
    <property type="entry name" value="ARGININE REPRESSOR"/>
    <property type="match status" value="1"/>
</dbReference>
<dbReference type="Pfam" id="PF01316">
    <property type="entry name" value="Arg_repressor"/>
    <property type="match status" value="1"/>
</dbReference>
<dbReference type="Pfam" id="PF02863">
    <property type="entry name" value="Arg_repressor_C"/>
    <property type="match status" value="1"/>
</dbReference>
<dbReference type="PRINTS" id="PR01467">
    <property type="entry name" value="ARGREPRESSOR"/>
</dbReference>
<dbReference type="SUPFAM" id="SSF55252">
    <property type="entry name" value="C-terminal domain of arginine repressor"/>
    <property type="match status" value="1"/>
</dbReference>
<dbReference type="SUPFAM" id="SSF46785">
    <property type="entry name" value="Winged helix' DNA-binding domain"/>
    <property type="match status" value="1"/>
</dbReference>
<reference key="1">
    <citation type="journal article" date="2009" name="Appl. Environ. Microbiol.">
        <title>Three genomes from the phylum Acidobacteria provide insight into the lifestyles of these microorganisms in soils.</title>
        <authorList>
            <person name="Ward N.L."/>
            <person name="Challacombe J.F."/>
            <person name="Janssen P.H."/>
            <person name="Henrissat B."/>
            <person name="Coutinho P.M."/>
            <person name="Wu M."/>
            <person name="Xie G."/>
            <person name="Haft D.H."/>
            <person name="Sait M."/>
            <person name="Badger J."/>
            <person name="Barabote R.D."/>
            <person name="Bradley B."/>
            <person name="Brettin T.S."/>
            <person name="Brinkac L.M."/>
            <person name="Bruce D."/>
            <person name="Creasy T."/>
            <person name="Daugherty S.C."/>
            <person name="Davidsen T.M."/>
            <person name="DeBoy R.T."/>
            <person name="Detter J.C."/>
            <person name="Dodson R.J."/>
            <person name="Durkin A.S."/>
            <person name="Ganapathy A."/>
            <person name="Gwinn-Giglio M."/>
            <person name="Han C.S."/>
            <person name="Khouri H."/>
            <person name="Kiss H."/>
            <person name="Kothari S.P."/>
            <person name="Madupu R."/>
            <person name="Nelson K.E."/>
            <person name="Nelson W.C."/>
            <person name="Paulsen I."/>
            <person name="Penn K."/>
            <person name="Ren Q."/>
            <person name="Rosovitz M.J."/>
            <person name="Selengut J.D."/>
            <person name="Shrivastava S."/>
            <person name="Sullivan S.A."/>
            <person name="Tapia R."/>
            <person name="Thompson L.S."/>
            <person name="Watkins K.L."/>
            <person name="Yang Q."/>
            <person name="Yu C."/>
            <person name="Zafar N."/>
            <person name="Zhou L."/>
            <person name="Kuske C.R."/>
        </authorList>
    </citation>
    <scope>NUCLEOTIDE SEQUENCE [LARGE SCALE GENOMIC DNA]</scope>
    <source>
        <strain>Ellin345</strain>
    </source>
</reference>
<evidence type="ECO:0000255" key="1">
    <source>
        <dbReference type="HAMAP-Rule" id="MF_00173"/>
    </source>
</evidence>
<accession>Q1IIY8</accession>
<proteinExistence type="inferred from homology"/>